<accession>P22416</accession>
<protein>
    <recommendedName>
        <fullName>Glutathione S-transferase GST-7.3</fullName>
        <ecNumber>2.5.1.18</ecNumber>
    </recommendedName>
</protein>
<feature type="chain" id="PRO_0000185975" description="Glutathione S-transferase GST-7.3">
    <location>
        <begin position="1"/>
        <end position="31" status="greater than"/>
    </location>
</feature>
<feature type="binding site" evidence="1">
    <location>
        <position position="10"/>
    </location>
    <ligand>
        <name>glutathione</name>
        <dbReference type="ChEBI" id="CHEBI:57925"/>
    </ligand>
</feature>
<feature type="non-terminal residue">
    <location>
        <position position="31"/>
    </location>
</feature>
<name>GST_SERMA</name>
<comment type="function">
    <text>Conjugation of reduced glutathione to a wide number of exogenous and endogenous hydrophobic electrophiles.</text>
</comment>
<comment type="catalytic activity">
    <reaction>
        <text>RX + glutathione = an S-substituted glutathione + a halide anion + H(+)</text>
        <dbReference type="Rhea" id="RHEA:16437"/>
        <dbReference type="ChEBI" id="CHEBI:15378"/>
        <dbReference type="ChEBI" id="CHEBI:16042"/>
        <dbReference type="ChEBI" id="CHEBI:17792"/>
        <dbReference type="ChEBI" id="CHEBI:57925"/>
        <dbReference type="ChEBI" id="CHEBI:90779"/>
        <dbReference type="EC" id="2.5.1.18"/>
    </reaction>
</comment>
<comment type="subunit">
    <text>Homodimer.</text>
</comment>
<comment type="subcellular location">
    <subcellularLocation>
        <location>Cytoplasm</location>
    </subcellularLocation>
</comment>
<comment type="similarity">
    <text evidence="2">Belongs to the GST superfamily. Beta family.</text>
</comment>
<sequence>MKLFYKAGACSLSPHIVLRELGLDFTAXKVD</sequence>
<dbReference type="EC" id="2.5.1.18"/>
<dbReference type="PIR" id="S14727">
    <property type="entry name" value="S14727"/>
</dbReference>
<dbReference type="STRING" id="273526.SMDB11_1495"/>
<dbReference type="GO" id="GO:0005737">
    <property type="term" value="C:cytoplasm"/>
    <property type="evidence" value="ECO:0007669"/>
    <property type="project" value="UniProtKB-SubCell"/>
</dbReference>
<dbReference type="GO" id="GO:0004364">
    <property type="term" value="F:glutathione transferase activity"/>
    <property type="evidence" value="ECO:0007669"/>
    <property type="project" value="UniProtKB-EC"/>
</dbReference>
<dbReference type="Gene3D" id="3.40.30.10">
    <property type="entry name" value="Glutaredoxin"/>
    <property type="match status" value="1"/>
</dbReference>
<reference key="1">
    <citation type="journal article" date="1991" name="Biochim. Biophys. Acta">
        <title>Purification and characterization of a novel glutathione transferase from Serratia marcescens.</title>
        <authorList>
            <person name="di Ilio C."/>
            <person name="Aceto A."/>
            <person name="Piccolomini R."/>
            <person name="Allocati N."/>
            <person name="Faraone A."/>
            <person name="Bucciarelli T."/>
            <person name="Barra D."/>
            <person name="Feferici G."/>
        </authorList>
    </citation>
    <scope>PROTEIN SEQUENCE</scope>
    <source>
        <strain>CIP 6755</strain>
    </source>
</reference>
<evidence type="ECO:0000250" key="1">
    <source>
        <dbReference type="UniProtKB" id="P0A9D2"/>
    </source>
</evidence>
<evidence type="ECO:0000305" key="2"/>
<proteinExistence type="evidence at protein level"/>
<organism>
    <name type="scientific">Serratia marcescens</name>
    <dbReference type="NCBI Taxonomy" id="615"/>
    <lineage>
        <taxon>Bacteria</taxon>
        <taxon>Pseudomonadati</taxon>
        <taxon>Pseudomonadota</taxon>
        <taxon>Gammaproteobacteria</taxon>
        <taxon>Enterobacterales</taxon>
        <taxon>Yersiniaceae</taxon>
        <taxon>Serratia</taxon>
    </lineage>
</organism>
<keyword id="KW-0963">Cytoplasm</keyword>
<keyword id="KW-0903">Direct protein sequencing</keyword>
<keyword id="KW-0808">Transferase</keyword>